<dbReference type="EMBL" id="CP000088">
    <property type="protein sequence ID" value="AAZ55139.1"/>
    <property type="molecule type" value="Genomic_DNA"/>
</dbReference>
<dbReference type="RefSeq" id="WP_011291548.1">
    <property type="nucleotide sequence ID" value="NC_007333.1"/>
</dbReference>
<dbReference type="SMR" id="Q47QX8"/>
<dbReference type="STRING" id="269800.Tfu_1101"/>
<dbReference type="KEGG" id="tfu:Tfu_1101"/>
<dbReference type="eggNOG" id="COG2001">
    <property type="taxonomic scope" value="Bacteria"/>
</dbReference>
<dbReference type="HOGENOM" id="CLU_107907_0_5_11"/>
<dbReference type="OrthoDB" id="9807753at2"/>
<dbReference type="GO" id="GO:0005737">
    <property type="term" value="C:cytoplasm"/>
    <property type="evidence" value="ECO:0007669"/>
    <property type="project" value="UniProtKB-UniRule"/>
</dbReference>
<dbReference type="GO" id="GO:0009295">
    <property type="term" value="C:nucleoid"/>
    <property type="evidence" value="ECO:0007669"/>
    <property type="project" value="UniProtKB-SubCell"/>
</dbReference>
<dbReference type="GO" id="GO:0003700">
    <property type="term" value="F:DNA-binding transcription factor activity"/>
    <property type="evidence" value="ECO:0007669"/>
    <property type="project" value="UniProtKB-UniRule"/>
</dbReference>
<dbReference type="GO" id="GO:0000976">
    <property type="term" value="F:transcription cis-regulatory region binding"/>
    <property type="evidence" value="ECO:0007669"/>
    <property type="project" value="TreeGrafter"/>
</dbReference>
<dbReference type="GO" id="GO:2000143">
    <property type="term" value="P:negative regulation of DNA-templated transcription initiation"/>
    <property type="evidence" value="ECO:0007669"/>
    <property type="project" value="TreeGrafter"/>
</dbReference>
<dbReference type="CDD" id="cd16321">
    <property type="entry name" value="MraZ_C"/>
    <property type="match status" value="1"/>
</dbReference>
<dbReference type="CDD" id="cd16320">
    <property type="entry name" value="MraZ_N"/>
    <property type="match status" value="1"/>
</dbReference>
<dbReference type="Gene3D" id="3.40.1550.20">
    <property type="entry name" value="Transcriptional regulator MraZ domain"/>
    <property type="match status" value="1"/>
</dbReference>
<dbReference type="HAMAP" id="MF_01008">
    <property type="entry name" value="MraZ"/>
    <property type="match status" value="1"/>
</dbReference>
<dbReference type="InterPro" id="IPR003444">
    <property type="entry name" value="MraZ"/>
</dbReference>
<dbReference type="InterPro" id="IPR035644">
    <property type="entry name" value="MraZ_C"/>
</dbReference>
<dbReference type="InterPro" id="IPR020603">
    <property type="entry name" value="MraZ_dom"/>
</dbReference>
<dbReference type="InterPro" id="IPR035642">
    <property type="entry name" value="MraZ_N"/>
</dbReference>
<dbReference type="InterPro" id="IPR038619">
    <property type="entry name" value="MraZ_sf"/>
</dbReference>
<dbReference type="InterPro" id="IPR007159">
    <property type="entry name" value="SpoVT-AbrB_dom"/>
</dbReference>
<dbReference type="InterPro" id="IPR037914">
    <property type="entry name" value="SpoVT-AbrB_sf"/>
</dbReference>
<dbReference type="NCBIfam" id="TIGR00242">
    <property type="entry name" value="division/cell wall cluster transcriptional repressor MraZ"/>
    <property type="match status" value="1"/>
</dbReference>
<dbReference type="PANTHER" id="PTHR34701">
    <property type="entry name" value="TRANSCRIPTIONAL REGULATOR MRAZ"/>
    <property type="match status" value="1"/>
</dbReference>
<dbReference type="PANTHER" id="PTHR34701:SF1">
    <property type="entry name" value="TRANSCRIPTIONAL REGULATOR MRAZ"/>
    <property type="match status" value="1"/>
</dbReference>
<dbReference type="Pfam" id="PF02381">
    <property type="entry name" value="MraZ"/>
    <property type="match status" value="2"/>
</dbReference>
<dbReference type="SUPFAM" id="SSF89447">
    <property type="entry name" value="AbrB/MazE/MraZ-like"/>
    <property type="match status" value="1"/>
</dbReference>
<dbReference type="PROSITE" id="PS51740">
    <property type="entry name" value="SPOVT_ABRB"/>
    <property type="match status" value="2"/>
</dbReference>
<reference key="1">
    <citation type="journal article" date="2007" name="J. Bacteriol.">
        <title>Genome sequence and analysis of the soil cellulolytic actinomycete Thermobifida fusca YX.</title>
        <authorList>
            <person name="Lykidis A."/>
            <person name="Mavromatis K."/>
            <person name="Ivanova N."/>
            <person name="Anderson I."/>
            <person name="Land M."/>
            <person name="DiBartolo G."/>
            <person name="Martinez M."/>
            <person name="Lapidus A."/>
            <person name="Lucas S."/>
            <person name="Copeland A."/>
            <person name="Richardson P."/>
            <person name="Wilson D.B."/>
            <person name="Kyrpides N."/>
        </authorList>
    </citation>
    <scope>NUCLEOTIDE SEQUENCE [LARGE SCALE GENOMIC DNA]</scope>
    <source>
        <strain>YX</strain>
    </source>
</reference>
<sequence length="143" mass="16147">MFLGTHSPRLDEKGRMFLPAKYRDELAGGLVVTKGQERCLYVFPIREFERITQVLRAAPVTAKAVRDYSRVFFASASNELPDRQGRVTIPANLRAYAGLNRDCVVIGANTRLEIWDAQTWADYEAEQEQVFAELAEEVLPGVL</sequence>
<protein>
    <recommendedName>
        <fullName>Transcriptional regulator MraZ</fullName>
    </recommendedName>
</protein>
<comment type="subunit">
    <text evidence="1">Forms oligomers.</text>
</comment>
<comment type="subcellular location">
    <subcellularLocation>
        <location evidence="1">Cytoplasm</location>
        <location evidence="1">Nucleoid</location>
    </subcellularLocation>
</comment>
<comment type="similarity">
    <text evidence="1">Belongs to the MraZ family.</text>
</comment>
<name>MRAZ_THEFY</name>
<organism>
    <name type="scientific">Thermobifida fusca (strain YX)</name>
    <dbReference type="NCBI Taxonomy" id="269800"/>
    <lineage>
        <taxon>Bacteria</taxon>
        <taxon>Bacillati</taxon>
        <taxon>Actinomycetota</taxon>
        <taxon>Actinomycetes</taxon>
        <taxon>Streptosporangiales</taxon>
        <taxon>Nocardiopsidaceae</taxon>
        <taxon>Thermobifida</taxon>
    </lineage>
</organism>
<gene>
    <name evidence="1" type="primary">mraZ</name>
    <name type="ordered locus">Tfu_1101</name>
</gene>
<evidence type="ECO:0000255" key="1">
    <source>
        <dbReference type="HAMAP-Rule" id="MF_01008"/>
    </source>
</evidence>
<evidence type="ECO:0000255" key="2">
    <source>
        <dbReference type="PROSITE-ProRule" id="PRU01076"/>
    </source>
</evidence>
<proteinExistence type="inferred from homology"/>
<keyword id="KW-0963">Cytoplasm</keyword>
<keyword id="KW-0238">DNA-binding</keyword>
<keyword id="KW-0677">Repeat</keyword>
<keyword id="KW-0804">Transcription</keyword>
<keyword id="KW-0805">Transcription regulation</keyword>
<accession>Q47QX8</accession>
<feature type="chain" id="PRO_0000230114" description="Transcriptional regulator MraZ">
    <location>
        <begin position="1"/>
        <end position="143"/>
    </location>
</feature>
<feature type="domain" description="SpoVT-AbrB 1" evidence="2">
    <location>
        <begin position="5"/>
        <end position="47"/>
    </location>
</feature>
<feature type="domain" description="SpoVT-AbrB 2" evidence="2">
    <location>
        <begin position="76"/>
        <end position="119"/>
    </location>
</feature>